<dbReference type="EMBL" id="Z72498">
    <property type="protein sequence ID" value="CAA96579.1"/>
    <property type="molecule type" value="Genomic_DNA"/>
</dbReference>
<dbReference type="EMBL" id="U57848">
    <property type="protein sequence ID" value="AAB02694.1"/>
    <property type="molecule type" value="Genomic_DNA"/>
</dbReference>
<dbReference type="EMBL" id="CU329671">
    <property type="protein sequence ID" value="CAB16898.1"/>
    <property type="molecule type" value="Genomic_DNA"/>
</dbReference>
<dbReference type="PIR" id="T39580">
    <property type="entry name" value="T39580"/>
</dbReference>
<dbReference type="RefSeq" id="NP_595788.1">
    <property type="nucleotide sequence ID" value="NM_001021689.2"/>
</dbReference>
<dbReference type="SMR" id="Q12238"/>
<dbReference type="BioGRID" id="276405">
    <property type="interactions" value="2"/>
</dbReference>
<dbReference type="FunCoup" id="Q12238">
    <property type="interactions" value="38"/>
</dbReference>
<dbReference type="STRING" id="284812.Q12238"/>
<dbReference type="PaxDb" id="4896-SPBC16E9.06c.1"/>
<dbReference type="EnsemblFungi" id="SPBC16E9.06c.1">
    <property type="protein sequence ID" value="SPBC16E9.06c.1:pep"/>
    <property type="gene ID" value="SPBC16E9.06c"/>
</dbReference>
<dbReference type="GeneID" id="2539858"/>
<dbReference type="KEGG" id="spo:2539858"/>
<dbReference type="PomBase" id="SPBC16E9.06c">
    <property type="gene designation" value="uvi31"/>
</dbReference>
<dbReference type="VEuPathDB" id="FungiDB:SPBC16E9.06c"/>
<dbReference type="eggNOG" id="KOG2313">
    <property type="taxonomic scope" value="Eukaryota"/>
</dbReference>
<dbReference type="HOGENOM" id="CLU_109462_2_1_1"/>
<dbReference type="InParanoid" id="Q12238"/>
<dbReference type="OMA" id="ENDGAHN"/>
<dbReference type="PhylomeDB" id="Q12238"/>
<dbReference type="PRO" id="PR:Q12238"/>
<dbReference type="Proteomes" id="UP000002485">
    <property type="component" value="Chromosome II"/>
</dbReference>
<dbReference type="GO" id="GO:0005829">
    <property type="term" value="C:cytosol"/>
    <property type="evidence" value="ECO:0007005"/>
    <property type="project" value="PomBase"/>
</dbReference>
<dbReference type="GO" id="GO:0005759">
    <property type="term" value="C:mitochondrial matrix"/>
    <property type="evidence" value="ECO:0000266"/>
    <property type="project" value="PomBase"/>
</dbReference>
<dbReference type="GO" id="GO:0005634">
    <property type="term" value="C:nucleus"/>
    <property type="evidence" value="ECO:0007005"/>
    <property type="project" value="PomBase"/>
</dbReference>
<dbReference type="GO" id="GO:0051301">
    <property type="term" value="P:cell division"/>
    <property type="evidence" value="ECO:0007669"/>
    <property type="project" value="UniProtKB-KW"/>
</dbReference>
<dbReference type="Gene3D" id="3.30.300.90">
    <property type="entry name" value="BolA-like"/>
    <property type="match status" value="1"/>
</dbReference>
<dbReference type="InterPro" id="IPR002634">
    <property type="entry name" value="BolA"/>
</dbReference>
<dbReference type="InterPro" id="IPR036065">
    <property type="entry name" value="BolA-like_sf"/>
</dbReference>
<dbReference type="PANTHER" id="PTHR46230">
    <property type="match status" value="1"/>
</dbReference>
<dbReference type="PANTHER" id="PTHR46230:SF7">
    <property type="entry name" value="BOLA-LIKE PROTEIN 1"/>
    <property type="match status" value="1"/>
</dbReference>
<dbReference type="Pfam" id="PF01722">
    <property type="entry name" value="BolA"/>
    <property type="match status" value="1"/>
</dbReference>
<dbReference type="PIRSF" id="PIRSF003113">
    <property type="entry name" value="BolA"/>
    <property type="match status" value="1"/>
</dbReference>
<dbReference type="SUPFAM" id="SSF82657">
    <property type="entry name" value="BolA-like"/>
    <property type="match status" value="1"/>
</dbReference>
<gene>
    <name evidence="5 6" type="primary">uvi31</name>
    <name evidence="8" type="ORF">SPBC16E9.06c</name>
</gene>
<reference key="1">
    <citation type="journal article" date="1997" name="Environ. Mol. Mutagen.">
        <title>Identification and expression of uvi31+, a UV-inducible gene from Schizosaccharomyces pombe.</title>
        <authorList>
            <person name="Kim S.H."/>
            <person name="Kim M."/>
            <person name="Lee J.K."/>
            <person name="Kim M.J."/>
            <person name="Jin Y.H."/>
            <person name="Seong R.H."/>
            <person name="Hong S.H."/>
            <person name="Joe C.O."/>
            <person name="Park S.D."/>
        </authorList>
    </citation>
    <scope>NUCLEOTIDE SEQUENCE [GENOMIC DNA]</scope>
    <scope>DEVELOPMENTAL STAGE</scope>
    <scope>INDUCTION</scope>
    <source>
        <strain evidence="6">JY741</strain>
    </source>
</reference>
<reference key="2">
    <citation type="journal article" date="2002" name="Mol. Cells">
        <title>Regulation of septation and cytokinesis during resumption of cell division requires uvi31+, a UV-inducible gene of fission yeast.</title>
        <authorList>
            <person name="Kim M.J."/>
            <person name="Kim H.S."/>
            <person name="Lee J.K."/>
            <person name="Lee C.B."/>
            <person name="Park S.D."/>
        </authorList>
    </citation>
    <scope>NUCLEOTIDE SEQUENCE [GENOMIC DNA]</scope>
    <scope>FUNCTION</scope>
    <scope>INDUCTION</scope>
    <scope>DISRUPTION PHENOTYPE</scope>
    <source>
        <strain evidence="5">JY741</strain>
    </source>
</reference>
<reference key="3">
    <citation type="journal article" date="2002" name="Nature">
        <title>The genome sequence of Schizosaccharomyces pombe.</title>
        <authorList>
            <person name="Wood V."/>
            <person name="Gwilliam R."/>
            <person name="Rajandream M.A."/>
            <person name="Lyne M.H."/>
            <person name="Lyne R."/>
            <person name="Stewart A."/>
            <person name="Sgouros J.G."/>
            <person name="Peat N."/>
            <person name="Hayles J."/>
            <person name="Baker S.G."/>
            <person name="Basham D."/>
            <person name="Bowman S."/>
            <person name="Brooks K."/>
            <person name="Brown D."/>
            <person name="Brown S."/>
            <person name="Chillingworth T."/>
            <person name="Churcher C.M."/>
            <person name="Collins M."/>
            <person name="Connor R."/>
            <person name="Cronin A."/>
            <person name="Davis P."/>
            <person name="Feltwell T."/>
            <person name="Fraser A."/>
            <person name="Gentles S."/>
            <person name="Goble A."/>
            <person name="Hamlin N."/>
            <person name="Harris D.E."/>
            <person name="Hidalgo J."/>
            <person name="Hodgson G."/>
            <person name="Holroyd S."/>
            <person name="Hornsby T."/>
            <person name="Howarth S."/>
            <person name="Huckle E.J."/>
            <person name="Hunt S."/>
            <person name="Jagels K."/>
            <person name="James K.D."/>
            <person name="Jones L."/>
            <person name="Jones M."/>
            <person name="Leather S."/>
            <person name="McDonald S."/>
            <person name="McLean J."/>
            <person name="Mooney P."/>
            <person name="Moule S."/>
            <person name="Mungall K.L."/>
            <person name="Murphy L.D."/>
            <person name="Niblett D."/>
            <person name="Odell C."/>
            <person name="Oliver K."/>
            <person name="O'Neil S."/>
            <person name="Pearson D."/>
            <person name="Quail M.A."/>
            <person name="Rabbinowitsch E."/>
            <person name="Rutherford K.M."/>
            <person name="Rutter S."/>
            <person name="Saunders D."/>
            <person name="Seeger K."/>
            <person name="Sharp S."/>
            <person name="Skelton J."/>
            <person name="Simmonds M.N."/>
            <person name="Squares R."/>
            <person name="Squares S."/>
            <person name="Stevens K."/>
            <person name="Taylor K."/>
            <person name="Taylor R.G."/>
            <person name="Tivey A."/>
            <person name="Walsh S.V."/>
            <person name="Warren T."/>
            <person name="Whitehead S."/>
            <person name="Woodward J.R."/>
            <person name="Volckaert G."/>
            <person name="Aert R."/>
            <person name="Robben J."/>
            <person name="Grymonprez B."/>
            <person name="Weltjens I."/>
            <person name="Vanstreels E."/>
            <person name="Rieger M."/>
            <person name="Schaefer M."/>
            <person name="Mueller-Auer S."/>
            <person name="Gabel C."/>
            <person name="Fuchs M."/>
            <person name="Duesterhoeft A."/>
            <person name="Fritzc C."/>
            <person name="Holzer E."/>
            <person name="Moestl D."/>
            <person name="Hilbert H."/>
            <person name="Borzym K."/>
            <person name="Langer I."/>
            <person name="Beck A."/>
            <person name="Lehrach H."/>
            <person name="Reinhardt R."/>
            <person name="Pohl T.M."/>
            <person name="Eger P."/>
            <person name="Zimmermann W."/>
            <person name="Wedler H."/>
            <person name="Wambutt R."/>
            <person name="Purnelle B."/>
            <person name="Goffeau A."/>
            <person name="Cadieu E."/>
            <person name="Dreano S."/>
            <person name="Gloux S."/>
            <person name="Lelaure V."/>
            <person name="Mottier S."/>
            <person name="Galibert F."/>
            <person name="Aves S.J."/>
            <person name="Xiang Z."/>
            <person name="Hunt C."/>
            <person name="Moore K."/>
            <person name="Hurst S.M."/>
            <person name="Lucas M."/>
            <person name="Rochet M."/>
            <person name="Gaillardin C."/>
            <person name="Tallada V.A."/>
            <person name="Garzon A."/>
            <person name="Thode G."/>
            <person name="Daga R.R."/>
            <person name="Cruzado L."/>
            <person name="Jimenez J."/>
            <person name="Sanchez M."/>
            <person name="del Rey F."/>
            <person name="Benito J."/>
            <person name="Dominguez A."/>
            <person name="Revuelta J.L."/>
            <person name="Moreno S."/>
            <person name="Armstrong J."/>
            <person name="Forsburg S.L."/>
            <person name="Cerutti L."/>
            <person name="Lowe T."/>
            <person name="McCombie W.R."/>
            <person name="Paulsen I."/>
            <person name="Potashkin J."/>
            <person name="Shpakovski G.V."/>
            <person name="Ussery D."/>
            <person name="Barrell B.G."/>
            <person name="Nurse P."/>
        </authorList>
    </citation>
    <scope>NUCLEOTIDE SEQUENCE [LARGE SCALE GENOMIC DNA]</scope>
    <source>
        <strain>972 / ATCC 24843</strain>
    </source>
</reference>
<reference key="4">
    <citation type="journal article" date="2006" name="Nat. Biotechnol.">
        <title>ORFeome cloning and global analysis of protein localization in the fission yeast Schizosaccharomyces pombe.</title>
        <authorList>
            <person name="Matsuyama A."/>
            <person name="Arai R."/>
            <person name="Yashiroda Y."/>
            <person name="Shirai A."/>
            <person name="Kamata A."/>
            <person name="Sekido S."/>
            <person name="Kobayashi Y."/>
            <person name="Hashimoto A."/>
            <person name="Hamamoto M."/>
            <person name="Hiraoka Y."/>
            <person name="Horinouchi S."/>
            <person name="Yoshida M."/>
        </authorList>
    </citation>
    <scope>SUBCELLULAR LOCATION [LARGE SCALE ANALYSIS]</scope>
</reference>
<name>UVI31_SCHPO</name>
<protein>
    <recommendedName>
        <fullName evidence="5 6">UV-induced protein uvi31</fullName>
    </recommendedName>
    <alternativeName>
        <fullName evidence="7">BolA-like protein 1</fullName>
    </alternativeName>
</protein>
<keyword id="KW-0131">Cell cycle</keyword>
<keyword id="KW-0132">Cell division</keyword>
<keyword id="KW-0963">Cytoplasm</keyword>
<keyword id="KW-0496">Mitochondrion</keyword>
<keyword id="KW-0539">Nucleus</keyword>
<keyword id="KW-1185">Reference proteome</keyword>
<sequence>MIRRFFHTMGRQDRIYKTLSEALKTDKITLYNDSYKHSHHIAMKGVPDTNETHFRLEIVSPEFSGMSRVARHRLVYGLLKDEFDGGLHALQITSSKTPDEVS</sequence>
<evidence type="ECO:0000250" key="1">
    <source>
        <dbReference type="UniProtKB" id="Q3E793"/>
    </source>
</evidence>
<evidence type="ECO:0000269" key="2">
    <source>
    </source>
</evidence>
<evidence type="ECO:0000269" key="3">
    <source>
    </source>
</evidence>
<evidence type="ECO:0000269" key="4">
    <source>
    </source>
</evidence>
<evidence type="ECO:0000303" key="5">
    <source>
    </source>
</evidence>
<evidence type="ECO:0000303" key="6">
    <source>
    </source>
</evidence>
<evidence type="ECO:0000305" key="7"/>
<evidence type="ECO:0000312" key="8">
    <source>
        <dbReference type="PomBase" id="SPBC16E9.06c"/>
    </source>
</evidence>
<comment type="function">
    <text evidence="1 2">Acts as a mitochondrial iron-sulfur (Fe-S) cluster assembly factor that facilitates [4Fe-4S] cluster insertion into a subset of mitochondrial proteins such as lipoyl synthase (LS) and succinate dehydrogenase (SDH). Required during the last step of iron-sulfur protein assembly when the iron-sulfur cluster is inserted into the target protein. Probably acts together with the monothiol glutaredoxin grx5. Not required for [2Fe-2S] cluster insertion into mitochondrial proteins (By similarity). May be involved in control of cell division, especially during the resumption from cell cycle arrest (PubMed:12521307).</text>
</comment>
<comment type="subcellular location">
    <subcellularLocation>
        <location evidence="1">Mitochondrion matrix</location>
    </subcellularLocation>
    <subcellularLocation>
        <location evidence="3">Cytoplasm</location>
    </subcellularLocation>
    <subcellularLocation>
        <location evidence="3">Nucleus</location>
    </subcellularLocation>
</comment>
<comment type="developmental stage">
    <text evidence="4">Expression varies throughout the cell cycle, with the highest expression in G1 phase before septation. Expression is also increased after S phase arrest.</text>
</comment>
<comment type="induction">
    <text evidence="2 4">Expression shows cellular growth phase dependency, with the maximal expression at the diauxic shift. Expression is rapidly decreased when cells approach stationary phase (PubMed:9258332). By UV light (PubMed:12521307, PubMed:9258332). Expressed maximally (3.2-fold) at 4 hours after exposure to 240 J/m(2) of UV light (PubMed:9258332).</text>
</comment>
<comment type="disruption phenotype">
    <text evidence="2">Leads to delayed spore germination and the unidirectional cell extension is not followed by cell division. Proliferates faster with smaller cell size than the wild-type cell during vegetative growth, but no other significant cellular anomaly, such as defects in septation or cytokinesis are detected. Sensitive to UV light. Shows a normal cell cycle delay after UV irradiation, but displays aberrant septum formation and defects in cytokinesis when released from the UV damage checkpoint. However, chromosome segregation is not affected.</text>
</comment>
<comment type="similarity">
    <text evidence="7">Belongs to the BolA/IbaG family.</text>
</comment>
<feature type="chain" id="PRO_0000201231" description="UV-induced protein uvi31">
    <location>
        <begin position="1"/>
        <end position="102"/>
    </location>
</feature>
<proteinExistence type="evidence at transcript level"/>
<organism>
    <name type="scientific">Schizosaccharomyces pombe (strain 972 / ATCC 24843)</name>
    <name type="common">Fission yeast</name>
    <dbReference type="NCBI Taxonomy" id="284812"/>
    <lineage>
        <taxon>Eukaryota</taxon>
        <taxon>Fungi</taxon>
        <taxon>Dikarya</taxon>
        <taxon>Ascomycota</taxon>
        <taxon>Taphrinomycotina</taxon>
        <taxon>Schizosaccharomycetes</taxon>
        <taxon>Schizosaccharomycetales</taxon>
        <taxon>Schizosaccharomycetaceae</taxon>
        <taxon>Schizosaccharomyces</taxon>
    </lineage>
</organism>
<accession>Q12238</accession>